<name>CO4_CAVPO</name>
<dbReference type="PIR" id="A17267">
    <property type="entry name" value="A17267"/>
</dbReference>
<dbReference type="FunCoup" id="P19069">
    <property type="interactions" value="61"/>
</dbReference>
<dbReference type="Ensembl" id="ENSCPOT00000034366.1">
    <property type="protein sequence ID" value="ENSCPOP00000022343.1"/>
    <property type="gene ID" value="ENSCPOG00000031422.1"/>
</dbReference>
<dbReference type="GeneTree" id="ENSGT00940000155739"/>
<dbReference type="InParanoid" id="P19069"/>
<dbReference type="Proteomes" id="UP000005447">
    <property type="component" value="Unassembled WGS sequence"/>
</dbReference>
<dbReference type="GO" id="GO:0005576">
    <property type="term" value="C:extracellular region"/>
    <property type="evidence" value="ECO:0007669"/>
    <property type="project" value="UniProtKB-SubCell"/>
</dbReference>
<dbReference type="GO" id="GO:0006958">
    <property type="term" value="P:complement activation, classical pathway"/>
    <property type="evidence" value="ECO:0007669"/>
    <property type="project" value="UniProtKB-KW"/>
</dbReference>
<dbReference type="GO" id="GO:0006954">
    <property type="term" value="P:inflammatory response"/>
    <property type="evidence" value="ECO:0007669"/>
    <property type="project" value="UniProtKB-KW"/>
</dbReference>
<dbReference type="GO" id="GO:0045087">
    <property type="term" value="P:innate immune response"/>
    <property type="evidence" value="ECO:0007669"/>
    <property type="project" value="UniProtKB-KW"/>
</dbReference>
<dbReference type="CDD" id="cd00017">
    <property type="entry name" value="ANATO"/>
    <property type="match status" value="1"/>
</dbReference>
<dbReference type="CDD" id="cd02896">
    <property type="entry name" value="complement_C3_C4_C5"/>
    <property type="match status" value="1"/>
</dbReference>
<dbReference type="FunFam" id="2.60.40.10:FF:000155">
    <property type="entry name" value="complement C3 isoform X1"/>
    <property type="match status" value="1"/>
</dbReference>
<dbReference type="FunFam" id="1.50.10.20:FF:000010">
    <property type="entry name" value="Complement C4-A"/>
    <property type="match status" value="1"/>
</dbReference>
<dbReference type="FunFam" id="2.20.130.20:FF:000002">
    <property type="entry name" value="Complement C4-A"/>
    <property type="match status" value="1"/>
</dbReference>
<dbReference type="FunFam" id="2.60.120.1540:FF:000001">
    <property type="entry name" value="Complement C4-A"/>
    <property type="match status" value="1"/>
</dbReference>
<dbReference type="FunFam" id="2.60.40.10:FF:000803">
    <property type="entry name" value="Complement C4-A"/>
    <property type="match status" value="1"/>
</dbReference>
<dbReference type="FunFam" id="2.60.40.1930:FF:000004">
    <property type="entry name" value="Complement C4-A"/>
    <property type="match status" value="1"/>
</dbReference>
<dbReference type="FunFam" id="2.60.40.1930:FF:000007">
    <property type="entry name" value="Complement C4-A"/>
    <property type="match status" value="1"/>
</dbReference>
<dbReference type="FunFam" id="2.60.40.1930:FF:000005">
    <property type="entry name" value="complement C4-A isoform X3"/>
    <property type="match status" value="1"/>
</dbReference>
<dbReference type="FunFam" id="6.20.50.160:FF:000001">
    <property type="entry name" value="Complement component 4"/>
    <property type="match status" value="1"/>
</dbReference>
<dbReference type="FunFam" id="2.60.40.1940:FF:000001">
    <property type="entry name" value="Complement component C3"/>
    <property type="match status" value="1"/>
</dbReference>
<dbReference type="FunFam" id="2.60.120.1540:FF:000006">
    <property type="entry name" value="MHC-linked complement C4"/>
    <property type="match status" value="1"/>
</dbReference>
<dbReference type="Gene3D" id="1.50.10.20">
    <property type="match status" value="1"/>
</dbReference>
<dbReference type="Gene3D" id="2.20.130.20">
    <property type="match status" value="1"/>
</dbReference>
<dbReference type="Gene3D" id="2.60.120.1540">
    <property type="match status" value="2"/>
</dbReference>
<dbReference type="Gene3D" id="2.60.40.1930">
    <property type="match status" value="3"/>
</dbReference>
<dbReference type="Gene3D" id="2.60.40.1940">
    <property type="match status" value="1"/>
</dbReference>
<dbReference type="Gene3D" id="6.20.50.160">
    <property type="match status" value="1"/>
</dbReference>
<dbReference type="Gene3D" id="2.60.40.690">
    <property type="entry name" value="Alpha-macroglobulin, receptor-binding domain"/>
    <property type="match status" value="1"/>
</dbReference>
<dbReference type="Gene3D" id="1.20.91.20">
    <property type="entry name" value="Anaphylotoxins (complement system)"/>
    <property type="match status" value="1"/>
</dbReference>
<dbReference type="Gene3D" id="2.60.40.10">
    <property type="entry name" value="Immunoglobulins"/>
    <property type="match status" value="2"/>
</dbReference>
<dbReference type="InterPro" id="IPR009048">
    <property type="entry name" value="A-macroglobulin_rcpt-bd"/>
</dbReference>
<dbReference type="InterPro" id="IPR036595">
    <property type="entry name" value="A-macroglobulin_rcpt-bd_sf"/>
</dbReference>
<dbReference type="InterPro" id="IPR050473">
    <property type="entry name" value="A2M/Complement_sys"/>
</dbReference>
<dbReference type="InterPro" id="IPR011625">
    <property type="entry name" value="A2M_N_BRD"/>
</dbReference>
<dbReference type="InterPro" id="IPR047565">
    <property type="entry name" value="Alpha-macroglob_thiol-ester_cl"/>
</dbReference>
<dbReference type="InterPro" id="IPR011626">
    <property type="entry name" value="Alpha-macroglobulin_TED"/>
</dbReference>
<dbReference type="InterPro" id="IPR000020">
    <property type="entry name" value="Anaphylatoxin/fibulin"/>
</dbReference>
<dbReference type="InterPro" id="IPR018081">
    <property type="entry name" value="Anaphylatoxin_comp_syst"/>
</dbReference>
<dbReference type="InterPro" id="IPR001840">
    <property type="entry name" value="Anaphylatoxn_comp_syst_dom"/>
</dbReference>
<dbReference type="InterPro" id="IPR048847">
    <property type="entry name" value="C4_MG1"/>
</dbReference>
<dbReference type="InterPro" id="IPR054587">
    <property type="entry name" value="CO4A-B_CUB_C"/>
</dbReference>
<dbReference type="InterPro" id="IPR013783">
    <property type="entry name" value="Ig-like_fold"/>
</dbReference>
<dbReference type="InterPro" id="IPR001599">
    <property type="entry name" value="Macroglobln_a2"/>
</dbReference>
<dbReference type="InterPro" id="IPR019742">
    <property type="entry name" value="MacrogloblnA2_CS"/>
</dbReference>
<dbReference type="InterPro" id="IPR002890">
    <property type="entry name" value="MG2"/>
</dbReference>
<dbReference type="InterPro" id="IPR041555">
    <property type="entry name" value="MG3"/>
</dbReference>
<dbReference type="InterPro" id="IPR040839">
    <property type="entry name" value="MG4"/>
</dbReference>
<dbReference type="InterPro" id="IPR008930">
    <property type="entry name" value="Terpenoid_cyclase/PrenylTrfase"/>
</dbReference>
<dbReference type="PANTHER" id="PTHR11412:SF86">
    <property type="entry name" value="COMPLEMENT C4-A-RELATED"/>
    <property type="match status" value="1"/>
</dbReference>
<dbReference type="PANTHER" id="PTHR11412">
    <property type="entry name" value="MACROGLOBULIN / COMPLEMENT"/>
    <property type="match status" value="1"/>
</dbReference>
<dbReference type="Pfam" id="PF00207">
    <property type="entry name" value="A2M"/>
    <property type="match status" value="1"/>
</dbReference>
<dbReference type="Pfam" id="PF07703">
    <property type="entry name" value="A2M_BRD"/>
    <property type="match status" value="1"/>
</dbReference>
<dbReference type="Pfam" id="PF07677">
    <property type="entry name" value="A2M_recep"/>
    <property type="match status" value="1"/>
</dbReference>
<dbReference type="Pfam" id="PF01821">
    <property type="entry name" value="ANATO"/>
    <property type="match status" value="1"/>
</dbReference>
<dbReference type="Pfam" id="PF21145">
    <property type="entry name" value="C4_MG1"/>
    <property type="match status" value="1"/>
</dbReference>
<dbReference type="Pfam" id="PF22661">
    <property type="entry name" value="CO4A-B_CUB_C"/>
    <property type="match status" value="1"/>
</dbReference>
<dbReference type="Pfam" id="PF01835">
    <property type="entry name" value="MG2"/>
    <property type="match status" value="1"/>
</dbReference>
<dbReference type="Pfam" id="PF17791">
    <property type="entry name" value="MG3"/>
    <property type="match status" value="1"/>
</dbReference>
<dbReference type="Pfam" id="PF17789">
    <property type="entry name" value="MG4"/>
    <property type="match status" value="1"/>
</dbReference>
<dbReference type="Pfam" id="PF07678">
    <property type="entry name" value="TED_complement"/>
    <property type="match status" value="1"/>
</dbReference>
<dbReference type="PRINTS" id="PR00004">
    <property type="entry name" value="ANAPHYLATOXN"/>
</dbReference>
<dbReference type="SMART" id="SM01360">
    <property type="entry name" value="A2M"/>
    <property type="match status" value="1"/>
</dbReference>
<dbReference type="SMART" id="SM01359">
    <property type="entry name" value="A2M_N_2"/>
    <property type="match status" value="1"/>
</dbReference>
<dbReference type="SMART" id="SM01361">
    <property type="entry name" value="A2M_recep"/>
    <property type="match status" value="1"/>
</dbReference>
<dbReference type="SMART" id="SM00104">
    <property type="entry name" value="ANATO"/>
    <property type="match status" value="1"/>
</dbReference>
<dbReference type="SMART" id="SM01419">
    <property type="entry name" value="Thiol-ester_cl"/>
    <property type="match status" value="1"/>
</dbReference>
<dbReference type="SUPFAM" id="SSF49410">
    <property type="entry name" value="Alpha-macroglobulin receptor domain"/>
    <property type="match status" value="1"/>
</dbReference>
<dbReference type="SUPFAM" id="SSF47686">
    <property type="entry name" value="Anaphylotoxins (complement system)"/>
    <property type="match status" value="1"/>
</dbReference>
<dbReference type="SUPFAM" id="SSF48239">
    <property type="entry name" value="Terpenoid cyclases/Protein prenyltransferases"/>
    <property type="match status" value="1"/>
</dbReference>
<dbReference type="PROSITE" id="PS00477">
    <property type="entry name" value="ALPHA_2_MACROGLOBULIN"/>
    <property type="match status" value="1"/>
</dbReference>
<dbReference type="PROSITE" id="PS01177">
    <property type="entry name" value="ANAPHYLATOXIN_1"/>
    <property type="match status" value="1"/>
</dbReference>
<dbReference type="PROSITE" id="PS01178">
    <property type="entry name" value="ANAPHYLATOXIN_2"/>
    <property type="match status" value="1"/>
</dbReference>
<dbReference type="PROSITE" id="PS50189">
    <property type="entry name" value="NTR"/>
    <property type="match status" value="1"/>
</dbReference>
<keyword id="KW-0165">Cleavage on pair of basic residues</keyword>
<keyword id="KW-0180">Complement pathway</keyword>
<keyword id="KW-0903">Direct protein sequencing</keyword>
<keyword id="KW-1015">Disulfide bond</keyword>
<keyword id="KW-0325">Glycoprotein</keyword>
<keyword id="KW-0391">Immunity</keyword>
<keyword id="KW-0395">Inflammatory response</keyword>
<keyword id="KW-0399">Innate immunity</keyword>
<keyword id="KW-0597">Phosphoprotein</keyword>
<keyword id="KW-1185">Reference proteome</keyword>
<keyword id="KW-0964">Secreted</keyword>
<keyword id="KW-0732">Signal</keyword>
<keyword id="KW-0765">Sulfation</keyword>
<keyword id="KW-0882">Thioester bond</keyword>
<sequence length="1742" mass="193245">MRLLWGLLWAFGLFASSLQKPRLLLFSPSVVNLGVPLSVGVQLQDARQGEVVTGFVFLRNPSHNNDRCSPKKAFTLTSQQDFVHLSLQVPQSDAKSCGLFGLRRSPEVQLVAQSPWLRDVLAKETDTQGVNLLFASRRGHFFVQTDQPVYNPGQRVQYRVFALDQKMRPSKDSLLVTVENSRGLRVRKKEVRDPSSIFQDSFLIPDISEPGTWRISAQFSDSLEANSSTKFEVKKYVLPNFEVKITPRKPYILVTSNHLGEIQVDIEARYIYGKPVQGVAYVRFGLLDEDGTKNFLRGLETQLKLKDGKSHVSLSRVELEGALQKLRLSVPDLQGLRLYTSAAVIESPGGEIEEAELTSWHFVPSAFSLDLSNTKRHLVPGAPFLLQALVREASGPPAPDVPVKVSVTLSGSVPKVPEIVQNTDRMGQVNMAINIPWGTTRLQLLVSAGSLYPAVARLEVRAPPSGSSGFLSIERPDPRAPRVQETVTLNLRSVGLSRATFPYYYYMVLSRGEIVSVGRERRQELTSVSVFVDHHLAPAFYFVAFYYHKGQPVANSLRVDVEAGACEGKLELRLDGTKDYRNGDSAKLQLLTDSEALVALGAVDTALYAVGSRTHKPLDMAKVFEVMNSYNLGCGPGGGDSAPQVFRAVGLAFSDGDLWTPVRETLSCPKEEKARKKRSVDFQKAVSEKLGQFASPEAKRCCQDGLTRLPMVRSCEQRAARVLQPACREPFLSCCQFAESLRKKSRAESPGGLGRAMEVLQEEELLEEDMILVRSFFPENWLWRVLRVDRSETLTVWLPDSMTTWEIHGVSLSQSKGLCVATPARLRVFREFHLHVRLPASIRRFEQLELRPVLYNYLEENLTMSVHIAPVEGLCLAGGGGLAQQVHVPAGSARPVPFFVVPTAATAVSLKVVARGTTLVGDAVSKVLQIEKEGAIHQEELVYELNPLDHRARTLEIPGNSDPNMIPEGESSSFVRVTASNPLETLGSEGALSPGGIASHLRLPTGCGEQTMTLLAPTLAASRYLDRTEQWSKLPPETKDRAVDLIQKGYMRIQEYRKSDGSYAAWLSRESSTWLTAFVLKVLSLAQDQVGGSPEKLQETASWLLGMQQADGSFHDPCPVIHRDMQGGLVGSDETVALTAFVVIALQHGLNAFQDQSAEALKQRVKASILKADSYLGGKASAGLLGAHAAAITAYALTLTKAPQDLQDVAHNNLMVMAQEIGDNRYWGSVTTSQSNVVSPTLAPLSPTDPMPQAPALWIETTAYGLLHLLLREGKAELADQVANWLMHQASFHGGFRSTQDTVMAMDALSAYWIASHTTENKELNVTLSAMGRRGFKSHILQLDSRQVQGLEEELQFSLSSKISVKVGGNSKGTLKVLRTYHVLDMTNTTCQDLRIEVTVMGYVEYTRQANADYEEDYEYDEFLAGDDPGAPLRPVMPLQLFEGRRNRRRREAPKVAEEQEPRVQYTVCIWREGKMRLSGMAIADITLLSGFSALSADLEKLTSLSDRYVSHFETQGPHVLLYFDSVPTSRECVGFGAMQEVAVGLVQPASAVVYDYYSPERRCSVFYGAPEKSKLLSTLCSGDVCQCAEGKCPRQRRALERGLQDEDRYRMKFACYHPRVEYGFQVRVLREDSRAAFRLFETKIIQVLHFTKDAKAAADQTRNFLVRDSCRLHLEPGREYLIMGLDGITSDLKGDPQYLLDSKSWIEEMPSERLCRSTRQRAACAQLNDFIQEYSTLGCQV</sequence>
<evidence type="ECO:0000250" key="1">
    <source>
        <dbReference type="UniProtKB" id="P0C0L4"/>
    </source>
</evidence>
<evidence type="ECO:0000255" key="2"/>
<evidence type="ECO:0000255" key="3">
    <source>
        <dbReference type="PROSITE-ProRule" id="PRU00022"/>
    </source>
</evidence>
<evidence type="ECO:0000255" key="4">
    <source>
        <dbReference type="PROSITE-ProRule" id="PRU00295"/>
    </source>
</evidence>
<evidence type="ECO:0000269" key="5">
    <source>
    </source>
</evidence>
<evidence type="ECO:0000269" key="6">
    <source>
    </source>
</evidence>
<evidence type="ECO:0000303" key="7">
    <source>
    </source>
</evidence>
<protein>
    <recommendedName>
        <fullName evidence="7">Complement C4</fullName>
    </recommendedName>
    <component>
        <recommendedName>
            <fullName>Complement C4 beta chain</fullName>
        </recommendedName>
    </component>
    <component>
        <recommendedName>
            <fullName>Complement C4 alpha chain</fullName>
        </recommendedName>
    </component>
    <component>
        <recommendedName>
            <fullName>C4a anaphylatoxin</fullName>
        </recommendedName>
    </component>
    <component>
        <recommendedName>
            <fullName>Complement C4b</fullName>
        </recommendedName>
        <alternativeName>
            <fullName>Complement C4b-alpha' chain</fullName>
        </alternativeName>
    </component>
    <component>
        <recommendedName>
            <fullName>Complement C4 gamma chain</fullName>
        </recommendedName>
    </component>
</protein>
<reference key="1">
    <citation type="journal article" date="2011" name="Nature">
        <title>A high-resolution map of human evolutionary constraint using 29 mammals.</title>
        <authorList>
            <person name="Lindblad-Toh K."/>
            <person name="Garber M."/>
            <person name="Zuk O."/>
            <person name="Lin M.F."/>
            <person name="Parker B.J."/>
            <person name="Washietl S."/>
            <person name="Kheradpour P."/>
            <person name="Ernst J."/>
            <person name="Jordan G."/>
            <person name="Mauceli E."/>
            <person name="Ward L.D."/>
            <person name="Lowe C.B."/>
            <person name="Holloway A.K."/>
            <person name="Clamp M."/>
            <person name="Gnerre S."/>
            <person name="Alfoldi J."/>
            <person name="Beal K."/>
            <person name="Chang J."/>
            <person name="Clawson H."/>
            <person name="Cuff J."/>
            <person name="Di Palma F."/>
            <person name="Fitzgerald S."/>
            <person name="Flicek P."/>
            <person name="Guttman M."/>
            <person name="Hubisz M.J."/>
            <person name="Jaffe D.B."/>
            <person name="Jungreis I."/>
            <person name="Kent W.J."/>
            <person name="Kostka D."/>
            <person name="Lara M."/>
            <person name="Martins A.L."/>
            <person name="Massingham T."/>
            <person name="Moltke I."/>
            <person name="Raney B.J."/>
            <person name="Rasmussen M.D."/>
            <person name="Robinson J."/>
            <person name="Stark A."/>
            <person name="Vilella A.J."/>
            <person name="Wen J."/>
            <person name="Xie X."/>
            <person name="Zody M.C."/>
            <person name="Baldwin J."/>
            <person name="Bloom T."/>
            <person name="Chin C.W."/>
            <person name="Heiman D."/>
            <person name="Nicol R."/>
            <person name="Nusbaum C."/>
            <person name="Young S."/>
            <person name="Wilkinson J."/>
            <person name="Worley K.C."/>
            <person name="Kovar C.L."/>
            <person name="Muzny D.M."/>
            <person name="Gibbs R.A."/>
            <person name="Cree A."/>
            <person name="Dihn H.H."/>
            <person name="Fowler G."/>
            <person name="Jhangiani S."/>
            <person name="Joshi V."/>
            <person name="Lee S."/>
            <person name="Lewis L.R."/>
            <person name="Nazareth L.V."/>
            <person name="Okwuonu G."/>
            <person name="Santibanez J."/>
            <person name="Warren W.C."/>
            <person name="Mardis E.R."/>
            <person name="Weinstock G.M."/>
            <person name="Wilson R.K."/>
            <person name="Delehaunty K."/>
            <person name="Dooling D."/>
            <person name="Fronik C."/>
            <person name="Fulton L."/>
            <person name="Fulton B."/>
            <person name="Graves T."/>
            <person name="Minx P."/>
            <person name="Sodergren E."/>
            <person name="Birney E."/>
            <person name="Margulies E.H."/>
            <person name="Herrero J."/>
            <person name="Green E.D."/>
            <person name="Haussler D."/>
            <person name="Siepel A."/>
            <person name="Goldman N."/>
            <person name="Pollard K.S."/>
            <person name="Pedersen J.S."/>
            <person name="Lander E.S."/>
            <person name="Kellis M."/>
        </authorList>
    </citation>
    <scope>NUCLEOTIDE SEQUENCE [LARGE SCALE GENOMIC DNA]</scope>
    <source>
        <strain>2N</strain>
    </source>
</reference>
<reference key="2">
    <citation type="journal article" date="1980" name="J. Biol. Chem.">
        <title>NH2-terminal sequence analysis of pro-C4, the precursor of the fourth component of guinea pig complement.</title>
        <authorList>
            <person name="Goldberger G."/>
            <person name="Abraham G.N."/>
            <person name="Williams J."/>
            <person name="Colten H.R."/>
        </authorList>
    </citation>
    <scope>PROTEIN SEQUENCE OF 20-41</scope>
</reference>
<reference key="3">
    <citation type="journal article" date="1980" name="Nature">
        <title>Precursor complement protein (pro-C4) is converted in vitro to native C4 by plasmin.</title>
        <authorList>
            <person name="Goldberger G."/>
            <person name="Colten H.R."/>
        </authorList>
    </citation>
    <scope>PROTEOLYTIC CLEAVAGE</scope>
</reference>
<organism>
    <name type="scientific">Cavia porcellus</name>
    <name type="common">Guinea pig</name>
    <dbReference type="NCBI Taxonomy" id="10141"/>
    <lineage>
        <taxon>Eukaryota</taxon>
        <taxon>Metazoa</taxon>
        <taxon>Chordata</taxon>
        <taxon>Craniata</taxon>
        <taxon>Vertebrata</taxon>
        <taxon>Euteleostomi</taxon>
        <taxon>Mammalia</taxon>
        <taxon>Eutheria</taxon>
        <taxon>Euarchontoglires</taxon>
        <taxon>Glires</taxon>
        <taxon>Rodentia</taxon>
        <taxon>Hystricomorpha</taxon>
        <taxon>Caviidae</taxon>
        <taxon>Cavia</taxon>
    </lineage>
</organism>
<feature type="signal peptide" evidence="6">
    <location>
        <begin position="1"/>
        <end position="19"/>
    </location>
</feature>
<feature type="chain" id="PRO_0000048519" description="Complement C4">
    <location>
        <begin position="20"/>
        <end position="1742"/>
    </location>
</feature>
<feature type="chain" id="PRO_0000462539" description="Complement C4 beta chain" evidence="1">
    <location>
        <begin position="20"/>
        <end position="674"/>
    </location>
</feature>
<feature type="propeptide" id="PRO_0000462540" evidence="1">
    <location>
        <begin position="675"/>
        <end position="678"/>
    </location>
</feature>
<feature type="chain" id="PRO_0000462541" description="Complement C4 alpha chain" evidence="1">
    <location>
        <begin position="679"/>
        <end position="1444"/>
    </location>
</feature>
<feature type="chain" id="PRO_0000462542" description="C4a anaphylatoxin" evidence="1">
    <location>
        <begin position="679"/>
        <end position="755"/>
    </location>
</feature>
<feature type="chain" id="PRO_0000462543" description="Complement C4b" evidence="1">
    <location>
        <begin position="756"/>
        <end position="1444"/>
    </location>
</feature>
<feature type="propeptide" id="PRO_0000462544" evidence="1">
    <location>
        <begin position="1445"/>
        <end position="1451"/>
    </location>
</feature>
<feature type="chain" id="PRO_0000462545" description="Complement C4 gamma chain" evidence="1">
    <location>
        <begin position="1452"/>
        <end position="1742"/>
    </location>
</feature>
<feature type="domain" description="Anaphylatoxin-like" evidence="3">
    <location>
        <begin position="701"/>
        <end position="735"/>
    </location>
</feature>
<feature type="domain" description="NTR" evidence="4">
    <location>
        <begin position="1593"/>
        <end position="1740"/>
    </location>
</feature>
<feature type="site" description="Cleavage; by C1S, MASP2 and GZMK" evidence="1">
    <location>
        <begin position="755"/>
        <end position="756"/>
    </location>
</feature>
<feature type="modified residue" description="Sulfotyrosine" evidence="1">
    <location>
        <position position="1414"/>
    </location>
</feature>
<feature type="modified residue" description="Sulfotyrosine" evidence="1">
    <location>
        <position position="1418"/>
    </location>
</feature>
<feature type="modified residue" description="Sulfotyrosine" evidence="1">
    <location>
        <position position="1420"/>
    </location>
</feature>
<feature type="glycosylation site" description="N-linked (GlcNAc...) asparagine" evidence="2">
    <location>
        <position position="60"/>
    </location>
</feature>
<feature type="glycosylation site" description="N-linked (GlcNAc...) asparagine" evidence="2">
    <location>
        <position position="226"/>
    </location>
</feature>
<feature type="glycosylation site" description="N-linked (GlcNAc...) asparagine" evidence="2">
    <location>
        <position position="861"/>
    </location>
</feature>
<feature type="glycosylation site" description="N-linked (GlcNAc...) asparagine" evidence="2">
    <location>
        <position position="1325"/>
    </location>
</feature>
<feature type="glycosylation site" description="N-linked (GlcNAc...) asparagine" evidence="2">
    <location>
        <position position="1388"/>
    </location>
</feature>
<feature type="disulfide bond" evidence="1">
    <location>
        <begin position="68"/>
        <end position="97"/>
    </location>
</feature>
<feature type="disulfide bond" description="Interchain (with C-819)" evidence="1">
    <location>
        <position position="566"/>
    </location>
</feature>
<feature type="disulfide bond" evidence="1">
    <location>
        <begin position="634"/>
        <end position="668"/>
    </location>
</feature>
<feature type="disulfide bond" evidence="1">
    <location>
        <begin position="701"/>
        <end position="727"/>
    </location>
</feature>
<feature type="disulfide bond" evidence="1">
    <location>
        <begin position="702"/>
        <end position="734"/>
    </location>
</feature>
<feature type="disulfide bond" evidence="1">
    <location>
        <begin position="715"/>
        <end position="735"/>
    </location>
</feature>
<feature type="disulfide bond" description="Interchain (with C-566)" evidence="1">
    <location>
        <position position="819"/>
    </location>
</feature>
<feature type="disulfide bond" description="Interchain (with C-1588)" evidence="1">
    <location>
        <position position="875"/>
    </location>
</feature>
<feature type="disulfide bond" description="Interchain (with C-1564)" evidence="1">
    <location>
        <position position="1391"/>
    </location>
</feature>
<feature type="disulfide bond" evidence="1">
    <location>
        <begin position="1469"/>
        <end position="1533"/>
    </location>
</feature>
<feature type="disulfide bond" description="Interchain (with C-1391)" evidence="1">
    <location>
        <position position="1564"/>
    </location>
</feature>
<feature type="disulfide bond" evidence="1">
    <location>
        <begin position="1581"/>
        <end position="1586"/>
    </location>
</feature>
<feature type="disulfide bond" description="Interchain (with C-875)" evidence="1">
    <location>
        <position position="1588"/>
    </location>
</feature>
<feature type="disulfide bond" evidence="1">
    <location>
        <begin position="1593"/>
        <end position="1671"/>
    </location>
</feature>
<feature type="disulfide bond" evidence="1">
    <location>
        <begin position="1616"/>
        <end position="1740"/>
    </location>
</feature>
<feature type="disulfide bond" evidence="1">
    <location>
        <begin position="1716"/>
        <end position="1725"/>
    </location>
</feature>
<feature type="cross-link" description="Isoglutamyl cysteine thioester (Cys-Gln)" evidence="1">
    <location>
        <begin position="1007"/>
        <end position="1010"/>
    </location>
</feature>
<gene>
    <name evidence="7" type="primary">C4</name>
</gene>
<proteinExistence type="evidence at protein level"/>
<comment type="function">
    <text evidence="1">Precursor of non-enzymatic components of the classical, lectin and GZMK complement pathways, which consist in a cascade of proteins that leads to phagocytosis and breakdown of pathogens and signaling that strengthens the adaptive immune system.</text>
</comment>
<comment type="function">
    <molecule>Complement C4b</molecule>
    <text evidence="1">Non-enzymatic component of C3 and C5 convertases. Generated following cleavage by complement proteases (C1S, MASP2 or GZMK, depending on the complement pathway), it covalently attaches to the surface of pathogens, where it acts as an opsonin that marks the surface of antigens for removal. It then recruits the serine protease complement C2b to form the C3 and C5 convertases, which cleave and activate C3 and C5, respectively, the next components of the complement pathways. Complement C4b-A isotype is responsible for effective binding to form amide bonds with immune aggregates or protein antigens, while complement C4b-B isotype catalyzes the transacylation of the thioester carbonyl group to form ester bonds with carbohydrate antigens.</text>
</comment>
<comment type="function">
    <molecule>C4a anaphylatoxin</molecule>
    <text evidence="1">Putative humoral mediator released following cleavage by complement proteases (C1S, MASP2 or GZMK, depending on the complement pathway). While it is strongly similar to anaphylatoxins, its role is unclear. Was reported to act as a mediator of local inflammatory process; however these effects were probably due to contamination with C3a and/C5a anaphylatoxins in biological assays.</text>
</comment>
<comment type="subunit">
    <text evidence="1">In absence of complement activation, circulates in blood as a disulfide-linked trimer of an alpha, beta and gamma chain.</text>
</comment>
<comment type="subunit">
    <molecule>Complement C4b</molecule>
    <text evidence="1">Complement C4b is composed of complement C4b-A, complement C4 beta and complement C4 gamma chains that are associated via disulfide bonds. Non-enzymatic component of the C3 convertase, also named C4bC2b, composed of the serine protease complement C2b (C2), as well as complement C4b. Non-enzymatic component of the C5 convertase, also named C4bC2bC3b, composed of the serine protease complement C2b (C2), complement C3b, as well as complement C4b.</text>
</comment>
<comment type="subcellular location">
    <subcellularLocation>
        <location evidence="6">Secreted</location>
    </subcellularLocation>
</comment>
<comment type="subcellular location">
    <molecule>C4a anaphylatoxin</molecule>
    <subcellularLocation>
        <location evidence="1">Secreted</location>
    </subcellularLocation>
</comment>
<comment type="subcellular location">
    <molecule>Complement C4b</molecule>
    <subcellularLocation>
        <location evidence="1">Secreted</location>
    </subcellularLocation>
    <subcellularLocation>
        <location evidence="1">Cell surface</location>
    </subcellularLocation>
    <text evidence="1">Covalently associated with the surface of pathogens: the internal thioester bond reacts with carbohydrate antigens on the target surface to form amide or ester bonds.</text>
</comment>
<comment type="PTM">
    <text evidence="1 5">Prior to secretion, the single-chain precursor is enzymatically cleaved by plasminogen (PLG) to yield non-identical chains alpha, beta and gamma (PubMed:6447255). During activation of the complement systems, the alpha chain is cleaved into C4a and C4b by different proteases depending on the complement pathway: C4b stays linked to the beta and gamma chains, while C4a is released in the plasma (By similarity). The alpha chain is cleaved by C1S to generate C4a and C4b following activation by the classical complement system (PubMed:6447255). The alpha chain is cleaved to generate C4a and C4b by MASP2 following activation by the lectin complement system (By similarity). The alpha chain is cleaved by GZMK to generate C4a and C4b following activation by the GZMK complement system (By similarity). Further degradation of C4b by C1 into the inactive fragments C4c and C4d blocks the generation of C3 convertase (By similarity). The proteolytic cleavages often are incomplete so that many structural forms can be found in plasma (By similarity).</text>
</comment>
<comment type="PTM">
    <molecule>Complement C4b</molecule>
    <text evidence="1">Upon activation, the internal thioester bond reacts with carbohydrate antigens on the target surface to form amide or ester bonds, leading to covalent association with the surface of pathogens.</text>
</comment>
<comment type="PTM">
    <molecule>Complement C4b</molecule>
    <text evidence="1">Complement C4b interacts with complement C3b via a thioester linkage.</text>
</comment>
<comment type="PTM">
    <text evidence="1">N- and O-glycosylated. O-glycosylated with a core 1 or possibly core 8 glycan.</text>
</comment>
<accession>P19069</accession>
<accession>A0A286XA82</accession>